<evidence type="ECO:0000255" key="1">
    <source>
        <dbReference type="HAMAP-Rule" id="MF_01382"/>
    </source>
</evidence>
<evidence type="ECO:0000256" key="2">
    <source>
        <dbReference type="SAM" id="MobiDB-lite"/>
    </source>
</evidence>
<protein>
    <recommendedName>
        <fullName evidence="1">Protein translocase subunit SecA</fullName>
        <ecNumber evidence="1">7.4.2.8</ecNumber>
    </recommendedName>
</protein>
<feature type="chain" id="PRO_0000321037" description="Protein translocase subunit SecA">
    <location>
        <begin position="1"/>
        <end position="907"/>
    </location>
</feature>
<feature type="region of interest" description="Disordered" evidence="2">
    <location>
        <begin position="841"/>
        <end position="907"/>
    </location>
</feature>
<feature type="compositionally biased region" description="Basic and acidic residues" evidence="2">
    <location>
        <begin position="841"/>
        <end position="853"/>
    </location>
</feature>
<feature type="compositionally biased region" description="Low complexity" evidence="2">
    <location>
        <begin position="854"/>
        <end position="865"/>
    </location>
</feature>
<feature type="compositionally biased region" description="Basic and acidic residues" evidence="2">
    <location>
        <begin position="872"/>
        <end position="887"/>
    </location>
</feature>
<feature type="binding site" evidence="1">
    <location>
        <position position="87"/>
    </location>
    <ligand>
        <name>ATP</name>
        <dbReference type="ChEBI" id="CHEBI:30616"/>
    </ligand>
</feature>
<feature type="binding site" evidence="1">
    <location>
        <begin position="105"/>
        <end position="109"/>
    </location>
    <ligand>
        <name>ATP</name>
        <dbReference type="ChEBI" id="CHEBI:30616"/>
    </ligand>
</feature>
<feature type="binding site" evidence="1">
    <location>
        <position position="513"/>
    </location>
    <ligand>
        <name>ATP</name>
        <dbReference type="ChEBI" id="CHEBI:30616"/>
    </ligand>
</feature>
<feature type="binding site" evidence="1">
    <location>
        <position position="891"/>
    </location>
    <ligand>
        <name>Zn(2+)</name>
        <dbReference type="ChEBI" id="CHEBI:29105"/>
    </ligand>
</feature>
<feature type="binding site" evidence="1">
    <location>
        <position position="893"/>
    </location>
    <ligand>
        <name>Zn(2+)</name>
        <dbReference type="ChEBI" id="CHEBI:29105"/>
    </ligand>
</feature>
<feature type="binding site" evidence="1">
    <location>
        <position position="902"/>
    </location>
    <ligand>
        <name>Zn(2+)</name>
        <dbReference type="ChEBI" id="CHEBI:29105"/>
    </ligand>
</feature>
<feature type="binding site" evidence="1">
    <location>
        <position position="903"/>
    </location>
    <ligand>
        <name>Zn(2+)</name>
        <dbReference type="ChEBI" id="CHEBI:29105"/>
    </ligand>
</feature>
<reference key="1">
    <citation type="journal article" date="2003" name="Genome Res.">
        <title>Comparative genome analysis of Vibrio vulnificus, a marine pathogen.</title>
        <authorList>
            <person name="Chen C.-Y."/>
            <person name="Wu K.-M."/>
            <person name="Chang Y.-C."/>
            <person name="Chang C.-H."/>
            <person name="Tsai H.-C."/>
            <person name="Liao T.-L."/>
            <person name="Liu Y.-M."/>
            <person name="Chen H.-J."/>
            <person name="Shen A.B.-T."/>
            <person name="Li J.-C."/>
            <person name="Su T.-L."/>
            <person name="Shao C.-P."/>
            <person name="Lee C.-T."/>
            <person name="Hor L.-I."/>
            <person name="Tsai S.-F."/>
        </authorList>
    </citation>
    <scope>NUCLEOTIDE SEQUENCE [LARGE SCALE GENOMIC DNA]</scope>
    <source>
        <strain>YJ016</strain>
    </source>
</reference>
<dbReference type="EC" id="7.4.2.8" evidence="1"/>
<dbReference type="EMBL" id="BA000037">
    <property type="protein sequence ID" value="BAC93385.1"/>
    <property type="molecule type" value="Genomic_DNA"/>
</dbReference>
<dbReference type="RefSeq" id="WP_011149507.1">
    <property type="nucleotide sequence ID" value="NC_005139.1"/>
</dbReference>
<dbReference type="SMR" id="Q7MNU4"/>
<dbReference type="STRING" id="672.VV93_v1c05640"/>
<dbReference type="KEGG" id="vvy:VV0621"/>
<dbReference type="eggNOG" id="COG0653">
    <property type="taxonomic scope" value="Bacteria"/>
</dbReference>
<dbReference type="HOGENOM" id="CLU_005314_3_0_6"/>
<dbReference type="Proteomes" id="UP000002675">
    <property type="component" value="Chromosome I"/>
</dbReference>
<dbReference type="GO" id="GO:0031522">
    <property type="term" value="C:cell envelope Sec protein transport complex"/>
    <property type="evidence" value="ECO:0007669"/>
    <property type="project" value="TreeGrafter"/>
</dbReference>
<dbReference type="GO" id="GO:0005829">
    <property type="term" value="C:cytosol"/>
    <property type="evidence" value="ECO:0007669"/>
    <property type="project" value="TreeGrafter"/>
</dbReference>
<dbReference type="GO" id="GO:0005886">
    <property type="term" value="C:plasma membrane"/>
    <property type="evidence" value="ECO:0007669"/>
    <property type="project" value="UniProtKB-SubCell"/>
</dbReference>
<dbReference type="GO" id="GO:0005524">
    <property type="term" value="F:ATP binding"/>
    <property type="evidence" value="ECO:0007669"/>
    <property type="project" value="UniProtKB-UniRule"/>
</dbReference>
<dbReference type="GO" id="GO:0046872">
    <property type="term" value="F:metal ion binding"/>
    <property type="evidence" value="ECO:0007669"/>
    <property type="project" value="UniProtKB-KW"/>
</dbReference>
<dbReference type="GO" id="GO:0008564">
    <property type="term" value="F:protein-exporting ATPase activity"/>
    <property type="evidence" value="ECO:0007669"/>
    <property type="project" value="UniProtKB-EC"/>
</dbReference>
<dbReference type="GO" id="GO:0065002">
    <property type="term" value="P:intracellular protein transmembrane transport"/>
    <property type="evidence" value="ECO:0007669"/>
    <property type="project" value="UniProtKB-UniRule"/>
</dbReference>
<dbReference type="GO" id="GO:0017038">
    <property type="term" value="P:protein import"/>
    <property type="evidence" value="ECO:0007669"/>
    <property type="project" value="InterPro"/>
</dbReference>
<dbReference type="GO" id="GO:0006605">
    <property type="term" value="P:protein targeting"/>
    <property type="evidence" value="ECO:0007669"/>
    <property type="project" value="UniProtKB-UniRule"/>
</dbReference>
<dbReference type="GO" id="GO:0043952">
    <property type="term" value="P:protein transport by the Sec complex"/>
    <property type="evidence" value="ECO:0007669"/>
    <property type="project" value="TreeGrafter"/>
</dbReference>
<dbReference type="CDD" id="cd17928">
    <property type="entry name" value="DEXDc_SecA"/>
    <property type="match status" value="1"/>
</dbReference>
<dbReference type="CDD" id="cd18803">
    <property type="entry name" value="SF2_C_secA"/>
    <property type="match status" value="1"/>
</dbReference>
<dbReference type="FunFam" id="1.10.3060.10:FF:000001">
    <property type="entry name" value="Preprotein translocase subunit SecA"/>
    <property type="match status" value="1"/>
</dbReference>
<dbReference type="FunFam" id="3.40.50.300:FF:000081">
    <property type="entry name" value="Preprotein translocase subunit SecA"/>
    <property type="match status" value="1"/>
</dbReference>
<dbReference type="FunFam" id="3.40.50.300:FF:000113">
    <property type="entry name" value="Preprotein translocase subunit SecA"/>
    <property type="match status" value="1"/>
</dbReference>
<dbReference type="FunFam" id="3.90.1440.10:FF:000001">
    <property type="entry name" value="Preprotein translocase subunit SecA"/>
    <property type="match status" value="1"/>
</dbReference>
<dbReference type="Gene3D" id="1.10.3060.10">
    <property type="entry name" value="Helical scaffold and wing domains of SecA"/>
    <property type="match status" value="1"/>
</dbReference>
<dbReference type="Gene3D" id="3.40.50.300">
    <property type="entry name" value="P-loop containing nucleotide triphosphate hydrolases"/>
    <property type="match status" value="2"/>
</dbReference>
<dbReference type="Gene3D" id="3.90.1440.10">
    <property type="entry name" value="SecA, preprotein cross-linking domain"/>
    <property type="match status" value="1"/>
</dbReference>
<dbReference type="HAMAP" id="MF_01382">
    <property type="entry name" value="SecA"/>
    <property type="match status" value="1"/>
</dbReference>
<dbReference type="InterPro" id="IPR014001">
    <property type="entry name" value="Helicase_ATP-bd"/>
</dbReference>
<dbReference type="InterPro" id="IPR001650">
    <property type="entry name" value="Helicase_C-like"/>
</dbReference>
<dbReference type="InterPro" id="IPR027417">
    <property type="entry name" value="P-loop_NTPase"/>
</dbReference>
<dbReference type="InterPro" id="IPR004027">
    <property type="entry name" value="SEC_C_motif"/>
</dbReference>
<dbReference type="InterPro" id="IPR000185">
    <property type="entry name" value="SecA"/>
</dbReference>
<dbReference type="InterPro" id="IPR020937">
    <property type="entry name" value="SecA_CS"/>
</dbReference>
<dbReference type="InterPro" id="IPR011115">
    <property type="entry name" value="SecA_DEAD"/>
</dbReference>
<dbReference type="InterPro" id="IPR014018">
    <property type="entry name" value="SecA_motor_DEAD"/>
</dbReference>
<dbReference type="InterPro" id="IPR011130">
    <property type="entry name" value="SecA_preprotein_X-link_dom"/>
</dbReference>
<dbReference type="InterPro" id="IPR044722">
    <property type="entry name" value="SecA_SF2_C"/>
</dbReference>
<dbReference type="InterPro" id="IPR011116">
    <property type="entry name" value="SecA_Wing/Scaffold"/>
</dbReference>
<dbReference type="InterPro" id="IPR036266">
    <property type="entry name" value="SecA_Wing/Scaffold_sf"/>
</dbReference>
<dbReference type="InterPro" id="IPR036670">
    <property type="entry name" value="SecA_X-link_sf"/>
</dbReference>
<dbReference type="NCBIfam" id="NF009538">
    <property type="entry name" value="PRK12904.1"/>
    <property type="match status" value="1"/>
</dbReference>
<dbReference type="NCBIfam" id="TIGR00963">
    <property type="entry name" value="secA"/>
    <property type="match status" value="1"/>
</dbReference>
<dbReference type="PANTHER" id="PTHR30612:SF0">
    <property type="entry name" value="CHLOROPLAST PROTEIN-TRANSPORTING ATPASE"/>
    <property type="match status" value="1"/>
</dbReference>
<dbReference type="PANTHER" id="PTHR30612">
    <property type="entry name" value="SECA INNER MEMBRANE COMPONENT OF SEC PROTEIN SECRETION SYSTEM"/>
    <property type="match status" value="1"/>
</dbReference>
<dbReference type="Pfam" id="PF21090">
    <property type="entry name" value="P-loop_SecA"/>
    <property type="match status" value="1"/>
</dbReference>
<dbReference type="Pfam" id="PF02810">
    <property type="entry name" value="SEC-C"/>
    <property type="match status" value="1"/>
</dbReference>
<dbReference type="Pfam" id="PF07517">
    <property type="entry name" value="SecA_DEAD"/>
    <property type="match status" value="1"/>
</dbReference>
<dbReference type="Pfam" id="PF01043">
    <property type="entry name" value="SecA_PP_bind"/>
    <property type="match status" value="1"/>
</dbReference>
<dbReference type="Pfam" id="PF07516">
    <property type="entry name" value="SecA_SW"/>
    <property type="match status" value="1"/>
</dbReference>
<dbReference type="PRINTS" id="PR00906">
    <property type="entry name" value="SECA"/>
</dbReference>
<dbReference type="SMART" id="SM00957">
    <property type="entry name" value="SecA_DEAD"/>
    <property type="match status" value="1"/>
</dbReference>
<dbReference type="SMART" id="SM00958">
    <property type="entry name" value="SecA_PP_bind"/>
    <property type="match status" value="1"/>
</dbReference>
<dbReference type="SUPFAM" id="SSF81886">
    <property type="entry name" value="Helical scaffold and wing domains of SecA"/>
    <property type="match status" value="1"/>
</dbReference>
<dbReference type="SUPFAM" id="SSF52540">
    <property type="entry name" value="P-loop containing nucleoside triphosphate hydrolases"/>
    <property type="match status" value="2"/>
</dbReference>
<dbReference type="SUPFAM" id="SSF81767">
    <property type="entry name" value="Pre-protein crosslinking domain of SecA"/>
    <property type="match status" value="1"/>
</dbReference>
<dbReference type="PROSITE" id="PS01312">
    <property type="entry name" value="SECA"/>
    <property type="match status" value="1"/>
</dbReference>
<dbReference type="PROSITE" id="PS51196">
    <property type="entry name" value="SECA_MOTOR_DEAD"/>
    <property type="match status" value="1"/>
</dbReference>
<accession>Q7MNU4</accession>
<proteinExistence type="inferred from homology"/>
<sequence>MITKLLTKVIGSRNDRTLRRLRKIVKEINNYEPTFEALSDEQLKAKTVEFRQRLEQGETLDQLLPEAFATVREASKRVYGMRHFDVQLIGGMVLNAGQIAEMRTGEGKTLTATLPAYLNALAGKGVHIVTVNDYLAKRDAETNRPLFEFLGMTVGINVPNMPHPAKKEAYQADILYGTNNEFGFDYLRDNMAFRNEDRVQRERFFAVVDEVDSILIDEARTPLIISGPAEDSSELYTRINALIPLLQKQDKEDSEEYRGDGHYTVDEKSKQVHLTETGQEFVEELMVKNGLMEEGDTLYSPTNISLLHHVNAALRAHVLFEKNVDYIVNEDGEVVIVDEHTGRTMPGRRWSEGLHQAVEAKEGVKIQNENQTLASITFQNYFRLYEKLSGMTGTADTEAFEFQSIYGLETVVIPTNKPMIRNDMPDVVYRTEAEKFAAIIEDIKARVEKGQPVLVGTVSIEKSELLSNALKKAKIKHNVLNAKFHEKEAEIVAEAGKPGAVTIATNMAGRGTDIVLGGSWQAKVESMANPTQEQIDEIKAEWKLVHDQVLESGGLHIIGTERHESRRIDNQLRGRSGRQGDAGSSRFYLSMEDSLLRIFTSDRMAALIQSGMEEGEAIESKMLSRSIEKAQRKVEGRNFDIRKQLLEYDDVANDQRKVVYELRDELMSVDDISDMIEHNRVDVLQGVIDEYIPPQSLEDMWDLEGLQERLKNDFDIDAPVKQWLEEDDKLYEEALREKVIDTAVEVYKAKEEVVGAQVLRNFEKSVMLQTLDTLWKEHLAAMDHLRQGIHLRGYAQKNPKQEYKRESFELFEGLLETLKSDVVMILSKVRVQQQEEVERMEAQRRAQAEEAARRAQAQHASAQSQLADDSDEGHHQPVVRDERKVGRNEPCPCGSGKKYKQCHGQIN</sequence>
<keyword id="KW-0067">ATP-binding</keyword>
<keyword id="KW-0997">Cell inner membrane</keyword>
<keyword id="KW-1003">Cell membrane</keyword>
<keyword id="KW-0963">Cytoplasm</keyword>
<keyword id="KW-0472">Membrane</keyword>
<keyword id="KW-0479">Metal-binding</keyword>
<keyword id="KW-0547">Nucleotide-binding</keyword>
<keyword id="KW-0653">Protein transport</keyword>
<keyword id="KW-1278">Translocase</keyword>
<keyword id="KW-0811">Translocation</keyword>
<keyword id="KW-0813">Transport</keyword>
<keyword id="KW-0862">Zinc</keyword>
<organism>
    <name type="scientific">Vibrio vulnificus (strain YJ016)</name>
    <dbReference type="NCBI Taxonomy" id="196600"/>
    <lineage>
        <taxon>Bacteria</taxon>
        <taxon>Pseudomonadati</taxon>
        <taxon>Pseudomonadota</taxon>
        <taxon>Gammaproteobacteria</taxon>
        <taxon>Vibrionales</taxon>
        <taxon>Vibrionaceae</taxon>
        <taxon>Vibrio</taxon>
    </lineage>
</organism>
<gene>
    <name evidence="1" type="primary">secA</name>
    <name type="ordered locus">VV0621</name>
</gene>
<name>SECA_VIBVY</name>
<comment type="function">
    <text evidence="1">Part of the Sec protein translocase complex. Interacts with the SecYEG preprotein conducting channel. Has a central role in coupling the hydrolysis of ATP to the transfer of proteins into and across the cell membrane, serving both as a receptor for the preprotein-SecB complex and as an ATP-driven molecular motor driving the stepwise translocation of polypeptide chains across the membrane.</text>
</comment>
<comment type="catalytic activity">
    <reaction evidence="1">
        <text>ATP + H2O + cellular proteinSide 1 = ADP + phosphate + cellular proteinSide 2.</text>
        <dbReference type="EC" id="7.4.2.8"/>
    </reaction>
</comment>
<comment type="cofactor">
    <cofactor evidence="1">
        <name>Zn(2+)</name>
        <dbReference type="ChEBI" id="CHEBI:29105"/>
    </cofactor>
    <text evidence="1">May bind 1 zinc ion per subunit.</text>
</comment>
<comment type="subunit">
    <text evidence="1">Monomer and homodimer. Part of the essential Sec protein translocation apparatus which comprises SecA, SecYEG and auxiliary proteins SecDF-YajC and YidC.</text>
</comment>
<comment type="subcellular location">
    <subcellularLocation>
        <location evidence="1">Cell inner membrane</location>
        <topology evidence="1">Peripheral membrane protein</topology>
        <orientation evidence="1">Cytoplasmic side</orientation>
    </subcellularLocation>
    <subcellularLocation>
        <location evidence="1">Cytoplasm</location>
    </subcellularLocation>
    <text evidence="1">Distribution is 50-50.</text>
</comment>
<comment type="similarity">
    <text evidence="1">Belongs to the SecA family.</text>
</comment>